<reference key="1">
    <citation type="journal article" date="2007" name="Gene">
        <title>Sperm-binding fibronectin type II-module proteins are genetically linked and functionally related.</title>
        <authorList>
            <person name="Ekhlasi-Hundrieser M."/>
            <person name="Schaefer B."/>
            <person name="Philipp U."/>
            <person name="Kuiper H."/>
            <person name="Leeb T."/>
            <person name="Mehta M."/>
            <person name="Kirchhoff C."/>
            <person name="Toepfer-Petersen E."/>
        </authorList>
    </citation>
    <scope>NUCLEOTIDE SEQUENCE [MRNA] (ISOFORMS 1 AND 2)</scope>
    <scope>PROTEIN SEQUENCE OF 24-37</scope>
    <scope>PHOSPHORYLCHOLINE-BINDING</scope>
    <scope>SUBCELLULAR LOCATION</scope>
    <scope>TISSUE SPECIFICITY</scope>
    <source>
        <tissue>Epididymis</tissue>
    </source>
</reference>
<feature type="signal peptide" evidence="1">
    <location>
        <begin position="1"/>
        <end position="23"/>
    </location>
</feature>
<feature type="chain" id="PRO_5000070518" description="Epididymal sperm-binding protein 1">
    <location>
        <begin position="24"/>
        <end position="223"/>
    </location>
</feature>
<feature type="domain" description="Fibronectin type-II 1" evidence="2">
    <location>
        <begin position="24"/>
        <end position="68"/>
    </location>
</feature>
<feature type="domain" description="Fibronectin type-II 2" evidence="2">
    <location>
        <begin position="69"/>
        <end position="117"/>
    </location>
</feature>
<feature type="domain" description="Fibronectin type-II 3" evidence="2">
    <location>
        <begin position="124"/>
        <end position="170"/>
    </location>
</feature>
<feature type="domain" description="Fibronectin type-II 4" evidence="2">
    <location>
        <begin position="177"/>
        <end position="223"/>
    </location>
</feature>
<feature type="disulfide bond" evidence="2">
    <location>
        <begin position="29"/>
        <end position="53"/>
    </location>
</feature>
<feature type="disulfide bond" evidence="2">
    <location>
        <begin position="43"/>
        <end position="66"/>
    </location>
</feature>
<feature type="disulfide bond" evidence="2">
    <location>
        <begin position="74"/>
        <end position="100"/>
    </location>
</feature>
<feature type="disulfide bond" evidence="2">
    <location>
        <begin position="88"/>
        <end position="115"/>
    </location>
</feature>
<feature type="disulfide bond" evidence="2">
    <location>
        <begin position="129"/>
        <end position="153"/>
    </location>
</feature>
<feature type="disulfide bond" evidence="2">
    <location>
        <begin position="143"/>
        <end position="168"/>
    </location>
</feature>
<feature type="disulfide bond" evidence="2">
    <location>
        <begin position="182"/>
        <end position="208"/>
    </location>
</feature>
<feature type="disulfide bond" evidence="2">
    <location>
        <begin position="196"/>
        <end position="223"/>
    </location>
</feature>
<feature type="splice variant" id="VSP_028929" description="In isoform 2." evidence="4">
    <original>EYGGNSFSKPCIFPSKYRNHIISECLEDESNKLWCPTTENMDMDGKWSLCADTR</original>
    <variation>G</variation>
    <location>
        <begin position="119"/>
        <end position="172"/>
    </location>
</feature>
<feature type="sequence conflict" description="In Ref. 1; CAD62255." evidence="5" ref="1">
    <original>R</original>
    <variation>W</variation>
    <location>
        <position position="4"/>
    </location>
</feature>
<feature type="sequence conflict" description="In Ref. 1; CAD62255." evidence="5" ref="1">
    <original>T</original>
    <variation>A</variation>
    <location>
        <position position="21"/>
    </location>
</feature>
<keyword id="KW-0025">Alternative splicing</keyword>
<keyword id="KW-0903">Direct protein sequencing</keyword>
<keyword id="KW-1015">Disulfide bond</keyword>
<keyword id="KW-0278">Fertilization</keyword>
<keyword id="KW-1185">Reference proteome</keyword>
<keyword id="KW-0677">Repeat</keyword>
<keyword id="KW-0964">Secreted</keyword>
<keyword id="KW-0732">Signal</keyword>
<name>ESPB1_PIG</name>
<gene>
    <name type="primary">ELSPBP1</name>
    <name type="synonym">E12</name>
</gene>
<accession>Q7YR83</accession>
<accession>Q7YR82</accession>
<evidence type="ECO:0000255" key="1"/>
<evidence type="ECO:0000255" key="2">
    <source>
        <dbReference type="PROSITE-ProRule" id="PRU00479"/>
    </source>
</evidence>
<evidence type="ECO:0000269" key="3">
    <source>
    </source>
</evidence>
<evidence type="ECO:0000303" key="4">
    <source>
    </source>
</evidence>
<evidence type="ECO:0000305" key="5"/>
<protein>
    <recommendedName>
        <fullName>Epididymal sperm-binding protein 1</fullName>
    </recommendedName>
    <alternativeName>
        <fullName>Epididymal secretory protein 12</fullName>
    </alternativeName>
</protein>
<comment type="function">
    <text>Binds to spermatozoa upon ejaculation and may play a role in sperm capacitation. Has phosphorylcholine-binding activity.</text>
</comment>
<comment type="subcellular location">
    <subcellularLocation>
        <location evidence="3">Secreted</location>
    </subcellularLocation>
</comment>
<comment type="alternative products">
    <event type="alternative splicing"/>
    <isoform>
        <id>Q7YR83-1</id>
        <name>1</name>
        <sequence type="displayed"/>
    </isoform>
    <isoform>
        <id>Q7YR83-2</id>
        <name>2</name>
        <sequence type="described" ref="VSP_028929"/>
    </isoform>
</comment>
<comment type="tissue specificity">
    <text evidence="3">Detected in epididymal duct epithelium and on sperm membrane (at protein level).</text>
</comment>
<comment type="PTM">
    <text>Not N-glycosylated.</text>
</comment>
<comment type="similarity">
    <text evidence="5">Belongs to the seminal plasma protein family.</text>
</comment>
<dbReference type="EMBL" id="AJ539176">
    <property type="protein sequence ID" value="CAD62254.1"/>
    <property type="molecule type" value="mRNA"/>
</dbReference>
<dbReference type="EMBL" id="AJ539177">
    <property type="protein sequence ID" value="CAD62255.1"/>
    <property type="molecule type" value="mRNA"/>
</dbReference>
<dbReference type="RefSeq" id="NP_999569.1">
    <molecule id="Q7YR83-1"/>
    <property type="nucleotide sequence ID" value="NM_214404.1"/>
</dbReference>
<dbReference type="SMR" id="Q7YR83"/>
<dbReference type="STRING" id="9823.ENSSSCP00000003383"/>
<dbReference type="PaxDb" id="9823-ENSSSCP00000003383"/>
<dbReference type="PeptideAtlas" id="Q7YR83"/>
<dbReference type="GeneID" id="399529"/>
<dbReference type="KEGG" id="ssc:399529"/>
<dbReference type="CTD" id="64100"/>
<dbReference type="eggNOG" id="KOG1565">
    <property type="taxonomic scope" value="Eukaryota"/>
</dbReference>
<dbReference type="InParanoid" id="Q7YR83"/>
<dbReference type="OrthoDB" id="406838at2759"/>
<dbReference type="Proteomes" id="UP000008227">
    <property type="component" value="Unplaced"/>
</dbReference>
<dbReference type="Proteomes" id="UP000314985">
    <property type="component" value="Unplaced"/>
</dbReference>
<dbReference type="Proteomes" id="UP000694570">
    <property type="component" value="Unplaced"/>
</dbReference>
<dbReference type="Proteomes" id="UP000694571">
    <property type="component" value="Unplaced"/>
</dbReference>
<dbReference type="Proteomes" id="UP000694720">
    <property type="component" value="Unplaced"/>
</dbReference>
<dbReference type="Proteomes" id="UP000694722">
    <property type="component" value="Unplaced"/>
</dbReference>
<dbReference type="Proteomes" id="UP000694723">
    <property type="component" value="Unplaced"/>
</dbReference>
<dbReference type="Proteomes" id="UP000694724">
    <property type="component" value="Unplaced"/>
</dbReference>
<dbReference type="Proteomes" id="UP000694725">
    <property type="component" value="Unplaced"/>
</dbReference>
<dbReference type="Proteomes" id="UP000694726">
    <property type="component" value="Unplaced"/>
</dbReference>
<dbReference type="Proteomes" id="UP000694727">
    <property type="component" value="Unplaced"/>
</dbReference>
<dbReference type="Proteomes" id="UP000694728">
    <property type="component" value="Unplaced"/>
</dbReference>
<dbReference type="GO" id="GO:0009986">
    <property type="term" value="C:cell surface"/>
    <property type="evidence" value="ECO:0000318"/>
    <property type="project" value="GO_Central"/>
</dbReference>
<dbReference type="GO" id="GO:0005576">
    <property type="term" value="C:extracellular region"/>
    <property type="evidence" value="ECO:0007669"/>
    <property type="project" value="UniProtKB-SubCell"/>
</dbReference>
<dbReference type="GO" id="GO:0008201">
    <property type="term" value="F:heparin binding"/>
    <property type="evidence" value="ECO:0000318"/>
    <property type="project" value="GO_Central"/>
</dbReference>
<dbReference type="GO" id="GO:0007338">
    <property type="term" value="P:single fertilization"/>
    <property type="evidence" value="ECO:0007669"/>
    <property type="project" value="UniProtKB-KW"/>
</dbReference>
<dbReference type="GO" id="GO:0048240">
    <property type="term" value="P:sperm capacitation"/>
    <property type="evidence" value="ECO:0000318"/>
    <property type="project" value="GO_Central"/>
</dbReference>
<dbReference type="CDD" id="cd00062">
    <property type="entry name" value="FN2"/>
    <property type="match status" value="3"/>
</dbReference>
<dbReference type="FunFam" id="2.10.10.10:FF:000003">
    <property type="entry name" value="binder of sperm protein homolog 1"/>
    <property type="match status" value="1"/>
</dbReference>
<dbReference type="FunFam" id="2.10.10.10:FF:000005">
    <property type="entry name" value="Epididymal sperm binding protein 1"/>
    <property type="match status" value="1"/>
</dbReference>
<dbReference type="FunFam" id="2.10.10.10:FF:000008">
    <property type="entry name" value="Epididymal sperm-binding protein 1"/>
    <property type="match status" value="1"/>
</dbReference>
<dbReference type="FunFam" id="2.10.10.10:FF:000009">
    <property type="entry name" value="Epididymal sperm-binding protein 1"/>
    <property type="match status" value="1"/>
</dbReference>
<dbReference type="Gene3D" id="2.10.10.10">
    <property type="entry name" value="Fibronectin, type II, collagen-binding"/>
    <property type="match status" value="4"/>
</dbReference>
<dbReference type="InterPro" id="IPR000562">
    <property type="entry name" value="FN_type2_dom"/>
</dbReference>
<dbReference type="InterPro" id="IPR036943">
    <property type="entry name" value="FN_type2_sf"/>
</dbReference>
<dbReference type="InterPro" id="IPR013806">
    <property type="entry name" value="Kringle-like"/>
</dbReference>
<dbReference type="InterPro" id="IPR051666">
    <property type="entry name" value="SP_Capacitation_Regulator"/>
</dbReference>
<dbReference type="PANTHER" id="PTHR22918">
    <property type="entry name" value="SEMINAL PLASMA PROTEIN"/>
    <property type="match status" value="1"/>
</dbReference>
<dbReference type="PANTHER" id="PTHR22918:SF3">
    <property type="entry name" value="SEMINAL PLASMA PROTEIN HSP-1"/>
    <property type="match status" value="1"/>
</dbReference>
<dbReference type="Pfam" id="PF00040">
    <property type="entry name" value="fn2"/>
    <property type="match status" value="4"/>
</dbReference>
<dbReference type="PRINTS" id="PR00013">
    <property type="entry name" value="FNTYPEII"/>
</dbReference>
<dbReference type="SMART" id="SM00059">
    <property type="entry name" value="FN2"/>
    <property type="match status" value="4"/>
</dbReference>
<dbReference type="SUPFAM" id="SSF57440">
    <property type="entry name" value="Kringle-like"/>
    <property type="match status" value="4"/>
</dbReference>
<dbReference type="PROSITE" id="PS00023">
    <property type="entry name" value="FN2_1"/>
    <property type="match status" value="2"/>
</dbReference>
<dbReference type="PROSITE" id="PS51092">
    <property type="entry name" value="FN2_2"/>
    <property type="match status" value="4"/>
</dbReference>
<sequence>MNRRSSYLLGCTAFILYSYETSGDTKDSCVFPFNYKGFTYFSCTRTNSLSPWCATRAVYDGQWKYCLIEDYPRCVFPFIYRGRSHRNCIVEGSFFGKLWCSVTSSFDEKQQWKYCEINEYGGNSFSKPCIFPSKYRNHIISECLEDESNKLWCPTTENMDMDGKWSLCADTRISSLVPGFPCHFPFNYKNKNYFNCTTKGSKENLLWCATSYNYDQDHTWVYC</sequence>
<organism>
    <name type="scientific">Sus scrofa</name>
    <name type="common">Pig</name>
    <dbReference type="NCBI Taxonomy" id="9823"/>
    <lineage>
        <taxon>Eukaryota</taxon>
        <taxon>Metazoa</taxon>
        <taxon>Chordata</taxon>
        <taxon>Craniata</taxon>
        <taxon>Vertebrata</taxon>
        <taxon>Euteleostomi</taxon>
        <taxon>Mammalia</taxon>
        <taxon>Eutheria</taxon>
        <taxon>Laurasiatheria</taxon>
        <taxon>Artiodactyla</taxon>
        <taxon>Suina</taxon>
        <taxon>Suidae</taxon>
        <taxon>Sus</taxon>
    </lineage>
</organism>
<proteinExistence type="evidence at protein level"/>